<reference key="1">
    <citation type="journal article" date="1992" name="Biochem. J.">
        <title>Nucleotide sequence, organization and characterization of the atp genes and the encoded subunits of Mycoplasma gallisepticum ATPase.</title>
        <authorList>
            <person name="Rasmussen O.F."/>
            <person name="Shirvan M.H."/>
            <person name="Margalit H."/>
            <person name="Christiansen C."/>
            <person name="Rottem S."/>
        </authorList>
    </citation>
    <scope>NUCLEOTIDE SEQUENCE [GENOMIC DNA]</scope>
    <source>
        <strain>A5969Var.B</strain>
    </source>
</reference>
<reference key="2">
    <citation type="journal article" date="2003" name="Microbiology">
        <title>The complete genome sequence of the avian pathogen Mycoplasma gallisepticum strain R(low).</title>
        <authorList>
            <person name="Papazisi L."/>
            <person name="Gorton T.S."/>
            <person name="Kutish G."/>
            <person name="Markham P.F."/>
            <person name="Browning G.F."/>
            <person name="Nguyen D.K."/>
            <person name="Swartzell S."/>
            <person name="Madan A."/>
            <person name="Mahairas G."/>
            <person name="Geary S.J."/>
        </authorList>
    </citation>
    <scope>NUCLEOTIDE SEQUENCE [LARGE SCALE GENOMIC DNA]</scope>
    <source>
        <strain>R(low / passage 15 / clone 2)</strain>
    </source>
</reference>
<sequence>MLPQEIVYTKLSSTETQNGWIDFLTTKPLASQGIEWTPLIPTAHVLSIFMVLFMIAILTAVYYTKLKKLKPTEPPTGYVLVVQLLILQFENLTVDLLGEKNRRLSLLFIIIFVYILISNLMSMVGGIAAPTSSSTVTFSLGLMSFFGTFIMGVKYQKLAYFRDFFVIIKIKKKTIPLMINPLNVIGYFAPLLSISLRLWGNVLAGSIFIALLYSLFRTFFTLWSPSSFSVGLVFGTLAGGLVIPAFHVYFDILVSAIQAFVFVSLMLTYWSQPIKAAENAAEEKGQQMIENQRLNVK</sequence>
<gene>
    <name evidence="1" type="primary">atpB</name>
    <name type="ordered locus">MYCGA3000</name>
    <name type="ORF">MGA_1164</name>
</gene>
<accession>P33251</accession>
<protein>
    <recommendedName>
        <fullName evidence="1">ATP synthase subunit a</fullName>
    </recommendedName>
    <alternativeName>
        <fullName evidence="1">ATP synthase F0 sector subunit a</fullName>
    </alternativeName>
    <alternativeName>
        <fullName evidence="1">F-ATPase subunit 6</fullName>
    </alternativeName>
</protein>
<feature type="chain" id="PRO_0000082059" description="ATP synthase subunit a">
    <location>
        <begin position="1"/>
        <end position="297"/>
    </location>
</feature>
<feature type="transmembrane region" description="Helical" evidence="1">
    <location>
        <begin position="38"/>
        <end position="58"/>
    </location>
</feature>
<feature type="transmembrane region" description="Helical" evidence="1">
    <location>
        <begin position="77"/>
        <end position="97"/>
    </location>
</feature>
<feature type="transmembrane region" description="Helical" evidence="1">
    <location>
        <begin position="107"/>
        <end position="127"/>
    </location>
</feature>
<feature type="transmembrane region" description="Helical" evidence="1">
    <location>
        <begin position="133"/>
        <end position="153"/>
    </location>
</feature>
<feature type="transmembrane region" description="Helical" evidence="1">
    <location>
        <begin position="174"/>
        <end position="194"/>
    </location>
</feature>
<feature type="transmembrane region" description="Helical" evidence="1">
    <location>
        <begin position="202"/>
        <end position="222"/>
    </location>
</feature>
<feature type="transmembrane region" description="Helical" evidence="1">
    <location>
        <begin position="230"/>
        <end position="250"/>
    </location>
</feature>
<feature type="transmembrane region" description="Helical" evidence="1">
    <location>
        <begin position="252"/>
        <end position="272"/>
    </location>
</feature>
<feature type="sequence conflict" description="In Ref. 1; CAA45545." evidence="2" ref="1">
    <original>W</original>
    <variation>G</variation>
    <location>
        <position position="223"/>
    </location>
</feature>
<feature type="sequence conflict" description="In Ref. 1; CAA45545." evidence="2" ref="1">
    <original>A</original>
    <variation>V</variation>
    <location>
        <position position="238"/>
    </location>
</feature>
<feature type="sequence conflict" description="In Ref. 1; CAA45545." evidence="2" ref="1">
    <original>G</original>
    <variation>R</variation>
    <location>
        <position position="285"/>
    </location>
</feature>
<organism>
    <name type="scientific">Mycoplasmoides gallisepticum (strain R(low / passage 15 / clone 2))</name>
    <name type="common">Mycoplasma gallisepticum</name>
    <dbReference type="NCBI Taxonomy" id="710127"/>
    <lineage>
        <taxon>Bacteria</taxon>
        <taxon>Bacillati</taxon>
        <taxon>Mycoplasmatota</taxon>
        <taxon>Mycoplasmoidales</taxon>
        <taxon>Mycoplasmoidaceae</taxon>
        <taxon>Mycoplasmoides</taxon>
    </lineage>
</organism>
<keyword id="KW-0066">ATP synthesis</keyword>
<keyword id="KW-1003">Cell membrane</keyword>
<keyword id="KW-0138">CF(0)</keyword>
<keyword id="KW-0375">Hydrogen ion transport</keyword>
<keyword id="KW-0406">Ion transport</keyword>
<keyword id="KW-0472">Membrane</keyword>
<keyword id="KW-1185">Reference proteome</keyword>
<keyword id="KW-0812">Transmembrane</keyword>
<keyword id="KW-1133">Transmembrane helix</keyword>
<keyword id="KW-0813">Transport</keyword>
<proteinExistence type="inferred from homology"/>
<name>ATP6_MYCGA</name>
<dbReference type="EMBL" id="X64256">
    <property type="protein sequence ID" value="CAA45545.1"/>
    <property type="molecule type" value="Genomic_DNA"/>
</dbReference>
<dbReference type="EMBL" id="AE015450">
    <property type="protein sequence ID" value="AAP56650.2"/>
    <property type="molecule type" value="Genomic_DNA"/>
</dbReference>
<dbReference type="PIR" id="S24333">
    <property type="entry name" value="S24333"/>
</dbReference>
<dbReference type="RefSeq" id="WP_011113541.1">
    <property type="nucleotide sequence ID" value="NC_004829.2"/>
</dbReference>
<dbReference type="SMR" id="P33251"/>
<dbReference type="KEGG" id="mga:MGA_1164"/>
<dbReference type="PATRIC" id="fig|233150.7.peg.334"/>
<dbReference type="HOGENOM" id="CLU_041018_3_0_14"/>
<dbReference type="OrthoDB" id="9789241at2"/>
<dbReference type="Proteomes" id="UP000001418">
    <property type="component" value="Chromosome"/>
</dbReference>
<dbReference type="GO" id="GO:0005886">
    <property type="term" value="C:plasma membrane"/>
    <property type="evidence" value="ECO:0007669"/>
    <property type="project" value="UniProtKB-SubCell"/>
</dbReference>
<dbReference type="GO" id="GO:0045259">
    <property type="term" value="C:proton-transporting ATP synthase complex"/>
    <property type="evidence" value="ECO:0007669"/>
    <property type="project" value="UniProtKB-KW"/>
</dbReference>
<dbReference type="GO" id="GO:0046933">
    <property type="term" value="F:proton-transporting ATP synthase activity, rotational mechanism"/>
    <property type="evidence" value="ECO:0007669"/>
    <property type="project" value="UniProtKB-UniRule"/>
</dbReference>
<dbReference type="GO" id="GO:0042777">
    <property type="term" value="P:proton motive force-driven plasma membrane ATP synthesis"/>
    <property type="evidence" value="ECO:0007669"/>
    <property type="project" value="TreeGrafter"/>
</dbReference>
<dbReference type="CDD" id="cd00310">
    <property type="entry name" value="ATP-synt_Fo_a_6"/>
    <property type="match status" value="1"/>
</dbReference>
<dbReference type="Gene3D" id="1.20.120.220">
    <property type="entry name" value="ATP synthase, F0 complex, subunit A"/>
    <property type="match status" value="1"/>
</dbReference>
<dbReference type="HAMAP" id="MF_01393">
    <property type="entry name" value="ATP_synth_a_bact"/>
    <property type="match status" value="1"/>
</dbReference>
<dbReference type="InterPro" id="IPR045082">
    <property type="entry name" value="ATP_syn_F0_a_bact/chloroplast"/>
</dbReference>
<dbReference type="InterPro" id="IPR000568">
    <property type="entry name" value="ATP_synth_F0_asu"/>
</dbReference>
<dbReference type="InterPro" id="IPR023011">
    <property type="entry name" value="ATP_synth_F0_asu_AS"/>
</dbReference>
<dbReference type="InterPro" id="IPR035908">
    <property type="entry name" value="F0_ATP_A_sf"/>
</dbReference>
<dbReference type="NCBIfam" id="NF004485">
    <property type="entry name" value="PRK05815.3-3"/>
    <property type="match status" value="1"/>
</dbReference>
<dbReference type="PANTHER" id="PTHR42823">
    <property type="entry name" value="ATP SYNTHASE SUBUNIT A, CHLOROPLASTIC"/>
    <property type="match status" value="1"/>
</dbReference>
<dbReference type="PANTHER" id="PTHR42823:SF3">
    <property type="entry name" value="ATP SYNTHASE SUBUNIT A, CHLOROPLASTIC"/>
    <property type="match status" value="1"/>
</dbReference>
<dbReference type="Pfam" id="PF00119">
    <property type="entry name" value="ATP-synt_A"/>
    <property type="match status" value="1"/>
</dbReference>
<dbReference type="PRINTS" id="PR00123">
    <property type="entry name" value="ATPASEA"/>
</dbReference>
<dbReference type="SUPFAM" id="SSF81336">
    <property type="entry name" value="F1F0 ATP synthase subunit A"/>
    <property type="match status" value="1"/>
</dbReference>
<dbReference type="PROSITE" id="PS00449">
    <property type="entry name" value="ATPASE_A"/>
    <property type="match status" value="1"/>
</dbReference>
<comment type="function">
    <text evidence="1">Key component of the proton channel; it plays a direct role in the translocation of protons across the membrane.</text>
</comment>
<comment type="subunit">
    <text evidence="1">F-type ATPases have 2 components, CF(1) - the catalytic core - and CF(0) - the membrane proton channel. CF(1) has five subunits: alpha(3), beta(3), gamma(1), delta(1), epsilon(1). CF(0) has three main subunits: a(1), b(2) and c(9-12). The alpha and beta chains form an alternating ring which encloses part of the gamma chain. CF(1) is attached to CF(0) by a central stalk formed by the gamma and epsilon chains, while a peripheral stalk is formed by the delta and b chains.</text>
</comment>
<comment type="subcellular location">
    <subcellularLocation>
        <location evidence="1">Cell membrane</location>
        <topology evidence="1">Multi-pass membrane protein</topology>
    </subcellularLocation>
</comment>
<comment type="similarity">
    <text evidence="1">Belongs to the ATPase A chain family.</text>
</comment>
<evidence type="ECO:0000255" key="1">
    <source>
        <dbReference type="HAMAP-Rule" id="MF_01393"/>
    </source>
</evidence>
<evidence type="ECO:0000305" key="2"/>